<keyword id="KW-0963">Cytoplasm</keyword>
<keyword id="KW-0489">Methyltransferase</keyword>
<keyword id="KW-1185">Reference proteome</keyword>
<keyword id="KW-0949">S-adenosyl-L-methionine</keyword>
<keyword id="KW-0808">Transferase</keyword>
<reference key="1">
    <citation type="journal article" date="2005" name="Nucleic Acids Res.">
        <title>The genome sequence of Xanthomonas oryzae pathovar oryzae KACC10331, the bacterial blight pathogen of rice.</title>
        <authorList>
            <person name="Lee B.-M."/>
            <person name="Park Y.-J."/>
            <person name="Park D.-S."/>
            <person name="Kang H.-W."/>
            <person name="Kim J.-G."/>
            <person name="Song E.-S."/>
            <person name="Park I.-C."/>
            <person name="Yoon U.-H."/>
            <person name="Hahn J.-H."/>
            <person name="Koo B.-S."/>
            <person name="Lee G.-B."/>
            <person name="Kim H."/>
            <person name="Park H.-S."/>
            <person name="Yoon K.-O."/>
            <person name="Kim J.-H."/>
            <person name="Jung C.-H."/>
            <person name="Koh N.-H."/>
            <person name="Seo J.-S."/>
            <person name="Go S.-J."/>
        </authorList>
    </citation>
    <scope>NUCLEOTIDE SEQUENCE [LARGE SCALE GENOMIC DNA]</scope>
    <source>
        <strain>KACC10331 / KXO85</strain>
    </source>
</reference>
<organism>
    <name type="scientific">Xanthomonas oryzae pv. oryzae (strain KACC10331 / KXO85)</name>
    <dbReference type="NCBI Taxonomy" id="291331"/>
    <lineage>
        <taxon>Bacteria</taxon>
        <taxon>Pseudomonadati</taxon>
        <taxon>Pseudomonadota</taxon>
        <taxon>Gammaproteobacteria</taxon>
        <taxon>Lysobacterales</taxon>
        <taxon>Lysobacteraceae</taxon>
        <taxon>Xanthomonas</taxon>
    </lineage>
</organism>
<evidence type="ECO:0000255" key="1">
    <source>
        <dbReference type="HAMAP-Rule" id="MF_00090"/>
    </source>
</evidence>
<sequence length="225" mass="24278">MTPRLRLQPESVGIGMTSQRVRDRLVERLREAGIHDEATLNAMQTVPRHLFIDEALASRAYEDTALPIGHGQTISQPWVVARMTEAVLQVTPTKVLEVGTGSGYQGAILAALGLEVYTVERIGDLLRQARKRFRHLGMNVRSKHDDGRIGWHEHGPYDAIVVTAAAPALVDALVDQLAVGGRLVAPVGGASSQSLVQLTRGADGTIEQQVLAPVTFVPLLSGMLD</sequence>
<comment type="function">
    <text evidence="1">Catalyzes the methyl esterification of L-isoaspartyl residues in peptides and proteins that result from spontaneous decomposition of normal L-aspartyl and L-asparaginyl residues. It plays a role in the repair and/or degradation of damaged proteins.</text>
</comment>
<comment type="catalytic activity">
    <reaction evidence="1">
        <text>[protein]-L-isoaspartate + S-adenosyl-L-methionine = [protein]-L-isoaspartate alpha-methyl ester + S-adenosyl-L-homocysteine</text>
        <dbReference type="Rhea" id="RHEA:12705"/>
        <dbReference type="Rhea" id="RHEA-COMP:12143"/>
        <dbReference type="Rhea" id="RHEA-COMP:12144"/>
        <dbReference type="ChEBI" id="CHEBI:57856"/>
        <dbReference type="ChEBI" id="CHEBI:59789"/>
        <dbReference type="ChEBI" id="CHEBI:90596"/>
        <dbReference type="ChEBI" id="CHEBI:90598"/>
        <dbReference type="EC" id="2.1.1.77"/>
    </reaction>
</comment>
<comment type="subcellular location">
    <subcellularLocation>
        <location evidence="1">Cytoplasm</location>
    </subcellularLocation>
</comment>
<comment type="similarity">
    <text evidence="1">Belongs to the methyltransferase superfamily. L-isoaspartyl/D-aspartyl protein methyltransferase family.</text>
</comment>
<name>PIMT_XANOR</name>
<accession>Q5GYL2</accession>
<protein>
    <recommendedName>
        <fullName evidence="1">Protein-L-isoaspartate O-methyltransferase</fullName>
        <ecNumber evidence="1">2.1.1.77</ecNumber>
    </recommendedName>
    <alternativeName>
        <fullName evidence="1">L-isoaspartyl protein carboxyl methyltransferase</fullName>
    </alternativeName>
    <alternativeName>
        <fullName evidence="1">Protein L-isoaspartyl methyltransferase</fullName>
    </alternativeName>
    <alternativeName>
        <fullName evidence="1">Protein-beta-aspartate methyltransferase</fullName>
        <shortName evidence="1">PIMT</shortName>
    </alternativeName>
</protein>
<feature type="chain" id="PRO_0000351956" description="Protein-L-isoaspartate O-methyltransferase">
    <location>
        <begin position="1"/>
        <end position="225"/>
    </location>
</feature>
<feature type="active site" evidence="1">
    <location>
        <position position="75"/>
    </location>
</feature>
<proteinExistence type="inferred from homology"/>
<gene>
    <name evidence="1" type="primary">pcm</name>
    <name type="ordered locus">XOO2955</name>
</gene>
<dbReference type="EC" id="2.1.1.77" evidence="1"/>
<dbReference type="EMBL" id="AE013598">
    <property type="protein sequence ID" value="AAW76209.1"/>
    <property type="molecule type" value="Genomic_DNA"/>
</dbReference>
<dbReference type="SMR" id="Q5GYL2"/>
<dbReference type="STRING" id="291331.XOO2955"/>
<dbReference type="KEGG" id="xoo:XOO2955"/>
<dbReference type="PATRIC" id="fig|291331.8.peg.3272"/>
<dbReference type="HOGENOM" id="CLU_055432_2_0_6"/>
<dbReference type="Proteomes" id="UP000006735">
    <property type="component" value="Chromosome"/>
</dbReference>
<dbReference type="GO" id="GO:0005737">
    <property type="term" value="C:cytoplasm"/>
    <property type="evidence" value="ECO:0007669"/>
    <property type="project" value="UniProtKB-SubCell"/>
</dbReference>
<dbReference type="GO" id="GO:0004719">
    <property type="term" value="F:protein-L-isoaspartate (D-aspartate) O-methyltransferase activity"/>
    <property type="evidence" value="ECO:0007669"/>
    <property type="project" value="UniProtKB-UniRule"/>
</dbReference>
<dbReference type="GO" id="GO:0032259">
    <property type="term" value="P:methylation"/>
    <property type="evidence" value="ECO:0007669"/>
    <property type="project" value="UniProtKB-KW"/>
</dbReference>
<dbReference type="GO" id="GO:0036211">
    <property type="term" value="P:protein modification process"/>
    <property type="evidence" value="ECO:0007669"/>
    <property type="project" value="UniProtKB-UniRule"/>
</dbReference>
<dbReference type="GO" id="GO:0030091">
    <property type="term" value="P:protein repair"/>
    <property type="evidence" value="ECO:0007669"/>
    <property type="project" value="UniProtKB-UniRule"/>
</dbReference>
<dbReference type="CDD" id="cd02440">
    <property type="entry name" value="AdoMet_MTases"/>
    <property type="match status" value="1"/>
</dbReference>
<dbReference type="FunFam" id="3.40.50.150:FF:000010">
    <property type="entry name" value="Protein-L-isoaspartate O-methyltransferase"/>
    <property type="match status" value="1"/>
</dbReference>
<dbReference type="Gene3D" id="3.40.50.150">
    <property type="entry name" value="Vaccinia Virus protein VP39"/>
    <property type="match status" value="1"/>
</dbReference>
<dbReference type="HAMAP" id="MF_00090">
    <property type="entry name" value="PIMT"/>
    <property type="match status" value="1"/>
</dbReference>
<dbReference type="InterPro" id="IPR000682">
    <property type="entry name" value="PCMT"/>
</dbReference>
<dbReference type="InterPro" id="IPR029063">
    <property type="entry name" value="SAM-dependent_MTases_sf"/>
</dbReference>
<dbReference type="NCBIfam" id="TIGR00080">
    <property type="entry name" value="pimt"/>
    <property type="match status" value="1"/>
</dbReference>
<dbReference type="NCBIfam" id="NF001453">
    <property type="entry name" value="PRK00312.1"/>
    <property type="match status" value="1"/>
</dbReference>
<dbReference type="PANTHER" id="PTHR11579">
    <property type="entry name" value="PROTEIN-L-ISOASPARTATE O-METHYLTRANSFERASE"/>
    <property type="match status" value="1"/>
</dbReference>
<dbReference type="PANTHER" id="PTHR11579:SF0">
    <property type="entry name" value="PROTEIN-L-ISOASPARTATE(D-ASPARTATE) O-METHYLTRANSFERASE"/>
    <property type="match status" value="1"/>
</dbReference>
<dbReference type="Pfam" id="PF01135">
    <property type="entry name" value="PCMT"/>
    <property type="match status" value="1"/>
</dbReference>
<dbReference type="SUPFAM" id="SSF53335">
    <property type="entry name" value="S-adenosyl-L-methionine-dependent methyltransferases"/>
    <property type="match status" value="1"/>
</dbReference>
<dbReference type="PROSITE" id="PS01279">
    <property type="entry name" value="PCMT"/>
    <property type="match status" value="1"/>
</dbReference>